<name>RL3_LEGPA</name>
<dbReference type="EMBL" id="CR628336">
    <property type="protein sequence ID" value="CAH11542.1"/>
    <property type="molecule type" value="Genomic_DNA"/>
</dbReference>
<dbReference type="SMR" id="Q5X859"/>
<dbReference type="KEGG" id="lpp:lpp0394"/>
<dbReference type="LegioList" id="lpp0394"/>
<dbReference type="HOGENOM" id="CLU_044142_4_1_6"/>
<dbReference type="GO" id="GO:0022625">
    <property type="term" value="C:cytosolic large ribosomal subunit"/>
    <property type="evidence" value="ECO:0007669"/>
    <property type="project" value="TreeGrafter"/>
</dbReference>
<dbReference type="GO" id="GO:0019843">
    <property type="term" value="F:rRNA binding"/>
    <property type="evidence" value="ECO:0007669"/>
    <property type="project" value="UniProtKB-UniRule"/>
</dbReference>
<dbReference type="GO" id="GO:0003735">
    <property type="term" value="F:structural constituent of ribosome"/>
    <property type="evidence" value="ECO:0007669"/>
    <property type="project" value="InterPro"/>
</dbReference>
<dbReference type="GO" id="GO:0006412">
    <property type="term" value="P:translation"/>
    <property type="evidence" value="ECO:0007669"/>
    <property type="project" value="UniProtKB-UniRule"/>
</dbReference>
<dbReference type="FunFam" id="2.40.30.10:FF:000004">
    <property type="entry name" value="50S ribosomal protein L3"/>
    <property type="match status" value="1"/>
</dbReference>
<dbReference type="FunFam" id="3.30.160.810:FF:000001">
    <property type="entry name" value="50S ribosomal protein L3"/>
    <property type="match status" value="1"/>
</dbReference>
<dbReference type="Gene3D" id="3.30.160.810">
    <property type="match status" value="1"/>
</dbReference>
<dbReference type="Gene3D" id="2.40.30.10">
    <property type="entry name" value="Translation factors"/>
    <property type="match status" value="1"/>
</dbReference>
<dbReference type="HAMAP" id="MF_01325_B">
    <property type="entry name" value="Ribosomal_uL3_B"/>
    <property type="match status" value="1"/>
</dbReference>
<dbReference type="InterPro" id="IPR000597">
    <property type="entry name" value="Ribosomal_uL3"/>
</dbReference>
<dbReference type="InterPro" id="IPR019927">
    <property type="entry name" value="Ribosomal_uL3_bac/org-type"/>
</dbReference>
<dbReference type="InterPro" id="IPR019926">
    <property type="entry name" value="Ribosomal_uL3_CS"/>
</dbReference>
<dbReference type="InterPro" id="IPR009000">
    <property type="entry name" value="Transl_B-barrel_sf"/>
</dbReference>
<dbReference type="NCBIfam" id="TIGR03625">
    <property type="entry name" value="L3_bact"/>
    <property type="match status" value="1"/>
</dbReference>
<dbReference type="PANTHER" id="PTHR11229">
    <property type="entry name" value="50S RIBOSOMAL PROTEIN L3"/>
    <property type="match status" value="1"/>
</dbReference>
<dbReference type="PANTHER" id="PTHR11229:SF16">
    <property type="entry name" value="LARGE RIBOSOMAL SUBUNIT PROTEIN UL3C"/>
    <property type="match status" value="1"/>
</dbReference>
<dbReference type="Pfam" id="PF00297">
    <property type="entry name" value="Ribosomal_L3"/>
    <property type="match status" value="1"/>
</dbReference>
<dbReference type="SUPFAM" id="SSF50447">
    <property type="entry name" value="Translation proteins"/>
    <property type="match status" value="1"/>
</dbReference>
<dbReference type="PROSITE" id="PS00474">
    <property type="entry name" value="RIBOSOMAL_L3"/>
    <property type="match status" value="1"/>
</dbReference>
<accession>Q5X859</accession>
<sequence length="216" mass="22896">MMIGLLGRKIGMTRVFTPEGVSVPVSVVEVQPNRVSQVKTAANDGYSAVQLTGGTKKSSKVSKPVAGHFAKAQIDAGDMQVEFRIDSEDAFTPGQVISVADVFTAGQYVDVSGLTKGKGFAGTVKRHNFRTQDASHGNSRSHRVPGSIGQNQTPGRVFKGKKMAGHMGNARCTIQSLELVKVDSERNLLLIKGAIPGAPGSRVEIKPAVKKQARGE</sequence>
<organism>
    <name type="scientific">Legionella pneumophila (strain Paris)</name>
    <dbReference type="NCBI Taxonomy" id="297246"/>
    <lineage>
        <taxon>Bacteria</taxon>
        <taxon>Pseudomonadati</taxon>
        <taxon>Pseudomonadota</taxon>
        <taxon>Gammaproteobacteria</taxon>
        <taxon>Legionellales</taxon>
        <taxon>Legionellaceae</taxon>
        <taxon>Legionella</taxon>
    </lineage>
</organism>
<comment type="function">
    <text evidence="1">One of the primary rRNA binding proteins, it binds directly near the 3'-end of the 23S rRNA, where it nucleates assembly of the 50S subunit.</text>
</comment>
<comment type="subunit">
    <text evidence="1">Part of the 50S ribosomal subunit. Forms a cluster with proteins L14 and L19.</text>
</comment>
<comment type="PTM">
    <text evidence="1">Methylated by PrmB.</text>
</comment>
<comment type="similarity">
    <text evidence="1">Belongs to the universal ribosomal protein uL3 family.</text>
</comment>
<feature type="chain" id="PRO_0000241359" description="Large ribosomal subunit protein uL3">
    <location>
        <begin position="1"/>
        <end position="216"/>
    </location>
</feature>
<feature type="region of interest" description="Disordered" evidence="2">
    <location>
        <begin position="132"/>
        <end position="155"/>
    </location>
</feature>
<feature type="modified residue" description="N5-methylglutamine" evidence="1">
    <location>
        <position position="152"/>
    </location>
</feature>
<keyword id="KW-0488">Methylation</keyword>
<keyword id="KW-0687">Ribonucleoprotein</keyword>
<keyword id="KW-0689">Ribosomal protein</keyword>
<keyword id="KW-0694">RNA-binding</keyword>
<keyword id="KW-0699">rRNA-binding</keyword>
<reference key="1">
    <citation type="journal article" date="2004" name="Nat. Genet.">
        <title>Evidence in the Legionella pneumophila genome for exploitation of host cell functions and high genome plasticity.</title>
        <authorList>
            <person name="Cazalet C."/>
            <person name="Rusniok C."/>
            <person name="Brueggemann H."/>
            <person name="Zidane N."/>
            <person name="Magnier A."/>
            <person name="Ma L."/>
            <person name="Tichit M."/>
            <person name="Jarraud S."/>
            <person name="Bouchier C."/>
            <person name="Vandenesch F."/>
            <person name="Kunst F."/>
            <person name="Etienne J."/>
            <person name="Glaser P."/>
            <person name="Buchrieser C."/>
        </authorList>
    </citation>
    <scope>NUCLEOTIDE SEQUENCE [LARGE SCALE GENOMIC DNA]</scope>
    <source>
        <strain>Paris</strain>
    </source>
</reference>
<gene>
    <name evidence="1" type="primary">rplC</name>
    <name type="ordered locus">lpp0394</name>
</gene>
<proteinExistence type="inferred from homology"/>
<protein>
    <recommendedName>
        <fullName evidence="1">Large ribosomal subunit protein uL3</fullName>
    </recommendedName>
    <alternativeName>
        <fullName evidence="3">50S ribosomal protein L3</fullName>
    </alternativeName>
</protein>
<evidence type="ECO:0000255" key="1">
    <source>
        <dbReference type="HAMAP-Rule" id="MF_01325"/>
    </source>
</evidence>
<evidence type="ECO:0000256" key="2">
    <source>
        <dbReference type="SAM" id="MobiDB-lite"/>
    </source>
</evidence>
<evidence type="ECO:0000305" key="3"/>